<comment type="similarity">
    <text evidence="1">Belongs to the UPF0173 family.</text>
</comment>
<keyword id="KW-0378">Hydrolase</keyword>
<proteinExistence type="inferred from homology"/>
<protein>
    <recommendedName>
        <fullName evidence="1">UPF0173 metal-dependent hydrolase Lm4b_01588</fullName>
    </recommendedName>
</protein>
<sequence>MKISFHGQSCIKIITGDTTILVDPFISGNEKCDLKAEEQMPDFIVLSHGHDDHVGDTVEIAKNSGATVICNADLASFLAVEDGLENIAPMHIGGKRQFSFGQVKLTQAFHGSQTVRDGRIVNLGFPTGIVFTIEDKNIYFAGDTGLFSDMKLIGELNPLDVAFLPIGDNFTMGPEDAAIAARFLQAKLVVPMHYNTFPLIAQDPHKFVASLDEGITGKVLEIGEGIEI</sequence>
<reference key="1">
    <citation type="journal article" date="2012" name="BMC Genomics">
        <title>Comparative genomics and transcriptomics of lineages I, II, and III strains of Listeria monocytogenes.</title>
        <authorList>
            <person name="Hain T."/>
            <person name="Ghai R."/>
            <person name="Billion A."/>
            <person name="Kuenne C.T."/>
            <person name="Steinweg C."/>
            <person name="Izar B."/>
            <person name="Mohamed W."/>
            <person name="Mraheil M."/>
            <person name="Domann E."/>
            <person name="Schaffrath S."/>
            <person name="Karst U."/>
            <person name="Goesmann A."/>
            <person name="Oehm S."/>
            <person name="Puhler A."/>
            <person name="Merkl R."/>
            <person name="Vorwerk S."/>
            <person name="Glaser P."/>
            <person name="Garrido P."/>
            <person name="Rusniok C."/>
            <person name="Buchrieser C."/>
            <person name="Goebel W."/>
            <person name="Chakraborty T."/>
        </authorList>
    </citation>
    <scope>NUCLEOTIDE SEQUENCE [LARGE SCALE GENOMIC DNA]</scope>
    <source>
        <strain>CLIP80459</strain>
    </source>
</reference>
<evidence type="ECO:0000255" key="1">
    <source>
        <dbReference type="HAMAP-Rule" id="MF_00457"/>
    </source>
</evidence>
<feature type="chain" id="PRO_1000206282" description="UPF0173 metal-dependent hydrolase Lm4b_01588">
    <location>
        <begin position="1"/>
        <end position="228"/>
    </location>
</feature>
<gene>
    <name type="ordered locus">Lm4b_01588</name>
</gene>
<dbReference type="EMBL" id="FM242711">
    <property type="protein sequence ID" value="CAS05349.1"/>
    <property type="molecule type" value="Genomic_DNA"/>
</dbReference>
<dbReference type="RefSeq" id="WP_003725990.1">
    <property type="nucleotide sequence ID" value="NC_012488.1"/>
</dbReference>
<dbReference type="SMR" id="C1KVM4"/>
<dbReference type="KEGG" id="lmc:Lm4b_01588"/>
<dbReference type="HOGENOM" id="CLU_070010_4_1_9"/>
<dbReference type="GO" id="GO:0016787">
    <property type="term" value="F:hydrolase activity"/>
    <property type="evidence" value="ECO:0007669"/>
    <property type="project" value="UniProtKB-UniRule"/>
</dbReference>
<dbReference type="Gene3D" id="3.60.15.10">
    <property type="entry name" value="Ribonuclease Z/Hydroxyacylglutathione hydrolase-like"/>
    <property type="match status" value="1"/>
</dbReference>
<dbReference type="HAMAP" id="MF_00457">
    <property type="entry name" value="UPF0173"/>
    <property type="match status" value="1"/>
</dbReference>
<dbReference type="InterPro" id="IPR001279">
    <property type="entry name" value="Metallo-B-lactamas"/>
</dbReference>
<dbReference type="InterPro" id="IPR036866">
    <property type="entry name" value="RibonucZ/Hydroxyglut_hydro"/>
</dbReference>
<dbReference type="InterPro" id="IPR022877">
    <property type="entry name" value="UPF0173"/>
</dbReference>
<dbReference type="InterPro" id="IPR050114">
    <property type="entry name" value="UPF0173_UPF0282_UlaG_hydrolase"/>
</dbReference>
<dbReference type="NCBIfam" id="NF001911">
    <property type="entry name" value="PRK00685.1"/>
    <property type="match status" value="1"/>
</dbReference>
<dbReference type="PANTHER" id="PTHR43546:SF3">
    <property type="entry name" value="UPF0173 METAL-DEPENDENT HYDROLASE MJ1163"/>
    <property type="match status" value="1"/>
</dbReference>
<dbReference type="PANTHER" id="PTHR43546">
    <property type="entry name" value="UPF0173 METAL-DEPENDENT HYDROLASE MJ1163-RELATED"/>
    <property type="match status" value="1"/>
</dbReference>
<dbReference type="Pfam" id="PF12706">
    <property type="entry name" value="Lactamase_B_2"/>
    <property type="match status" value="1"/>
</dbReference>
<dbReference type="SMART" id="SM00849">
    <property type="entry name" value="Lactamase_B"/>
    <property type="match status" value="1"/>
</dbReference>
<dbReference type="SUPFAM" id="SSF56281">
    <property type="entry name" value="Metallo-hydrolase/oxidoreductase"/>
    <property type="match status" value="1"/>
</dbReference>
<name>Y1588_LISMC</name>
<accession>C1KVM4</accession>
<organism>
    <name type="scientific">Listeria monocytogenes serotype 4b (strain CLIP80459)</name>
    <dbReference type="NCBI Taxonomy" id="568819"/>
    <lineage>
        <taxon>Bacteria</taxon>
        <taxon>Bacillati</taxon>
        <taxon>Bacillota</taxon>
        <taxon>Bacilli</taxon>
        <taxon>Bacillales</taxon>
        <taxon>Listeriaceae</taxon>
        <taxon>Listeria</taxon>
    </lineage>
</organism>